<reference key="1">
    <citation type="journal article" date="2000" name="Nature">
        <title>Sequence and analysis of chromosome 1 of the plant Arabidopsis thaliana.</title>
        <authorList>
            <person name="Theologis A."/>
            <person name="Ecker J.R."/>
            <person name="Palm C.J."/>
            <person name="Federspiel N.A."/>
            <person name="Kaul S."/>
            <person name="White O."/>
            <person name="Alonso J."/>
            <person name="Altafi H."/>
            <person name="Araujo R."/>
            <person name="Bowman C.L."/>
            <person name="Brooks S.Y."/>
            <person name="Buehler E."/>
            <person name="Chan A."/>
            <person name="Chao Q."/>
            <person name="Chen H."/>
            <person name="Cheuk R.F."/>
            <person name="Chin C.W."/>
            <person name="Chung M.K."/>
            <person name="Conn L."/>
            <person name="Conway A.B."/>
            <person name="Conway A.R."/>
            <person name="Creasy T.H."/>
            <person name="Dewar K."/>
            <person name="Dunn P."/>
            <person name="Etgu P."/>
            <person name="Feldblyum T.V."/>
            <person name="Feng J.-D."/>
            <person name="Fong B."/>
            <person name="Fujii C.Y."/>
            <person name="Gill J.E."/>
            <person name="Goldsmith A.D."/>
            <person name="Haas B."/>
            <person name="Hansen N.F."/>
            <person name="Hughes B."/>
            <person name="Huizar L."/>
            <person name="Hunter J.L."/>
            <person name="Jenkins J."/>
            <person name="Johnson-Hopson C."/>
            <person name="Khan S."/>
            <person name="Khaykin E."/>
            <person name="Kim C.J."/>
            <person name="Koo H.L."/>
            <person name="Kremenetskaia I."/>
            <person name="Kurtz D.B."/>
            <person name="Kwan A."/>
            <person name="Lam B."/>
            <person name="Langin-Hooper S."/>
            <person name="Lee A."/>
            <person name="Lee J.M."/>
            <person name="Lenz C.A."/>
            <person name="Li J.H."/>
            <person name="Li Y.-P."/>
            <person name="Lin X."/>
            <person name="Liu S.X."/>
            <person name="Liu Z.A."/>
            <person name="Luros J.S."/>
            <person name="Maiti R."/>
            <person name="Marziali A."/>
            <person name="Militscher J."/>
            <person name="Miranda M."/>
            <person name="Nguyen M."/>
            <person name="Nierman W.C."/>
            <person name="Osborne B.I."/>
            <person name="Pai G."/>
            <person name="Peterson J."/>
            <person name="Pham P.K."/>
            <person name="Rizzo M."/>
            <person name="Rooney T."/>
            <person name="Rowley D."/>
            <person name="Sakano H."/>
            <person name="Salzberg S.L."/>
            <person name="Schwartz J.R."/>
            <person name="Shinn P."/>
            <person name="Southwick A.M."/>
            <person name="Sun H."/>
            <person name="Tallon L.J."/>
            <person name="Tambunga G."/>
            <person name="Toriumi M.J."/>
            <person name="Town C.D."/>
            <person name="Utterback T."/>
            <person name="Van Aken S."/>
            <person name="Vaysberg M."/>
            <person name="Vysotskaia V.S."/>
            <person name="Walker M."/>
            <person name="Wu D."/>
            <person name="Yu G."/>
            <person name="Fraser C.M."/>
            <person name="Venter J.C."/>
            <person name="Davis R.W."/>
        </authorList>
    </citation>
    <scope>NUCLEOTIDE SEQUENCE [LARGE SCALE GENOMIC DNA]</scope>
    <source>
        <strain>cv. Columbia</strain>
    </source>
</reference>
<reference key="2">
    <citation type="journal article" date="2017" name="Plant J.">
        <title>Araport11: a complete reannotation of the Arabidopsis thaliana reference genome.</title>
        <authorList>
            <person name="Cheng C.Y."/>
            <person name="Krishnakumar V."/>
            <person name="Chan A.P."/>
            <person name="Thibaud-Nissen F."/>
            <person name="Schobel S."/>
            <person name="Town C.D."/>
        </authorList>
    </citation>
    <scope>GENOME REANNOTATION</scope>
    <source>
        <strain>cv. Columbia</strain>
    </source>
</reference>
<reference key="3">
    <citation type="journal article" date="2003" name="Science">
        <title>Empirical analysis of transcriptional activity in the Arabidopsis genome.</title>
        <authorList>
            <person name="Yamada K."/>
            <person name="Lim J."/>
            <person name="Dale J.M."/>
            <person name="Chen H."/>
            <person name="Shinn P."/>
            <person name="Palm C.J."/>
            <person name="Southwick A.M."/>
            <person name="Wu H.C."/>
            <person name="Kim C.J."/>
            <person name="Nguyen M."/>
            <person name="Pham P.K."/>
            <person name="Cheuk R.F."/>
            <person name="Karlin-Newmann G."/>
            <person name="Liu S.X."/>
            <person name="Lam B."/>
            <person name="Sakano H."/>
            <person name="Wu T."/>
            <person name="Yu G."/>
            <person name="Miranda M."/>
            <person name="Quach H.L."/>
            <person name="Tripp M."/>
            <person name="Chang C.H."/>
            <person name="Lee J.M."/>
            <person name="Toriumi M.J."/>
            <person name="Chan M.M."/>
            <person name="Tang C.C."/>
            <person name="Onodera C.S."/>
            <person name="Deng J.M."/>
            <person name="Akiyama K."/>
            <person name="Ansari Y."/>
            <person name="Arakawa T."/>
            <person name="Banh J."/>
            <person name="Banno F."/>
            <person name="Bowser L."/>
            <person name="Brooks S.Y."/>
            <person name="Carninci P."/>
            <person name="Chao Q."/>
            <person name="Choy N."/>
            <person name="Enju A."/>
            <person name="Goldsmith A.D."/>
            <person name="Gurjal M."/>
            <person name="Hansen N.F."/>
            <person name="Hayashizaki Y."/>
            <person name="Johnson-Hopson C."/>
            <person name="Hsuan V.W."/>
            <person name="Iida K."/>
            <person name="Karnes M."/>
            <person name="Khan S."/>
            <person name="Koesema E."/>
            <person name="Ishida J."/>
            <person name="Jiang P.X."/>
            <person name="Jones T."/>
            <person name="Kawai J."/>
            <person name="Kamiya A."/>
            <person name="Meyers C."/>
            <person name="Nakajima M."/>
            <person name="Narusaka M."/>
            <person name="Seki M."/>
            <person name="Sakurai T."/>
            <person name="Satou M."/>
            <person name="Tamse R."/>
            <person name="Vaysberg M."/>
            <person name="Wallender E.K."/>
            <person name="Wong C."/>
            <person name="Yamamura Y."/>
            <person name="Yuan S."/>
            <person name="Shinozaki K."/>
            <person name="Davis R.W."/>
            <person name="Theologis A."/>
            <person name="Ecker J.R."/>
        </authorList>
    </citation>
    <scope>NUCLEOTIDE SEQUENCE [LARGE SCALE MRNA]</scope>
    <source>
        <strain>cv. Columbia</strain>
    </source>
</reference>
<reference key="4">
    <citation type="journal article" date="2008" name="BMC Res. Notes">
        <title>Stress regulated members of the plant organic cation transporter family are localized to the vacuolar membrane.</title>
        <authorList>
            <person name="Kuefner I."/>
            <person name="Koch W."/>
        </authorList>
    </citation>
    <scope>SUBCELLULAR LOCATION</scope>
    <scope>INDUCTION BY ABIOTIC STRESS</scope>
    <scope>TISSUE SPECIFICITY</scope>
    <source>
        <strain>cv. Columbia</strain>
    </source>
</reference>
<gene>
    <name type="primary">OCT3</name>
    <name type="synonym">3-Oct</name>
    <name type="ordered locus">At1g16390</name>
    <name type="ORF">F3O9.19</name>
</gene>
<protein>
    <recommendedName>
        <fullName>Organic cation/carnitine transporter 3</fullName>
        <shortName>AtOCT3</shortName>
    </recommendedName>
</protein>
<proteinExistence type="evidence at transcript level"/>
<dbReference type="EMBL" id="AC006341">
    <property type="protein sequence ID" value="AAD34691.1"/>
    <property type="molecule type" value="Genomic_DNA"/>
</dbReference>
<dbReference type="EMBL" id="CP002684">
    <property type="protein sequence ID" value="AEE29445.1"/>
    <property type="molecule type" value="Genomic_DNA"/>
</dbReference>
<dbReference type="EMBL" id="AY078972">
    <property type="protein sequence ID" value="AAL79578.1"/>
    <property type="molecule type" value="mRNA"/>
</dbReference>
<dbReference type="EMBL" id="BT000863">
    <property type="protein sequence ID" value="AAN38700.1"/>
    <property type="molecule type" value="mRNA"/>
</dbReference>
<dbReference type="PIR" id="B86299">
    <property type="entry name" value="B86299"/>
</dbReference>
<dbReference type="RefSeq" id="NP_173089.1">
    <property type="nucleotide sequence ID" value="NM_101505.3"/>
</dbReference>
<dbReference type="SMR" id="Q9SA38"/>
<dbReference type="FunCoup" id="Q9SA38">
    <property type="interactions" value="26"/>
</dbReference>
<dbReference type="STRING" id="3702.Q9SA38"/>
<dbReference type="GlyCosmos" id="Q9SA38">
    <property type="glycosylation" value="2 sites, No reported glycans"/>
</dbReference>
<dbReference type="GlyGen" id="Q9SA38">
    <property type="glycosylation" value="2 sites"/>
</dbReference>
<dbReference type="PaxDb" id="3702-AT1G16390.1"/>
<dbReference type="ProteomicsDB" id="250864"/>
<dbReference type="EnsemblPlants" id="AT1G16390.1">
    <property type="protein sequence ID" value="AT1G16390.1"/>
    <property type="gene ID" value="AT1G16390"/>
</dbReference>
<dbReference type="GeneID" id="838209"/>
<dbReference type="Gramene" id="AT1G16390.1">
    <property type="protein sequence ID" value="AT1G16390.1"/>
    <property type="gene ID" value="AT1G16390"/>
</dbReference>
<dbReference type="KEGG" id="ath:AT1G16390"/>
<dbReference type="Araport" id="AT1G16390"/>
<dbReference type="TAIR" id="AT1G16390">
    <property type="gene designation" value="OCT3"/>
</dbReference>
<dbReference type="eggNOG" id="KOG0255">
    <property type="taxonomic scope" value="Eukaryota"/>
</dbReference>
<dbReference type="HOGENOM" id="CLU_001265_33_5_1"/>
<dbReference type="InParanoid" id="Q9SA38"/>
<dbReference type="OMA" id="MEAYMGA"/>
<dbReference type="PhylomeDB" id="Q9SA38"/>
<dbReference type="PRO" id="PR:Q9SA38"/>
<dbReference type="Proteomes" id="UP000006548">
    <property type="component" value="Chromosome 1"/>
</dbReference>
<dbReference type="ExpressionAtlas" id="Q9SA38">
    <property type="expression patterns" value="baseline and differential"/>
</dbReference>
<dbReference type="GO" id="GO:0009705">
    <property type="term" value="C:plant-type vacuole membrane"/>
    <property type="evidence" value="ECO:0000314"/>
    <property type="project" value="UniProtKB"/>
</dbReference>
<dbReference type="GO" id="GO:0005524">
    <property type="term" value="F:ATP binding"/>
    <property type="evidence" value="ECO:0007669"/>
    <property type="project" value="UniProtKB-KW"/>
</dbReference>
<dbReference type="GO" id="GO:0022857">
    <property type="term" value="F:transmembrane transporter activity"/>
    <property type="evidence" value="ECO:0007669"/>
    <property type="project" value="InterPro"/>
</dbReference>
<dbReference type="GO" id="GO:0070417">
    <property type="term" value="P:cellular response to cold"/>
    <property type="evidence" value="ECO:0000270"/>
    <property type="project" value="UniProtKB"/>
</dbReference>
<dbReference type="GO" id="GO:0006811">
    <property type="term" value="P:monoatomic ion transport"/>
    <property type="evidence" value="ECO:0007669"/>
    <property type="project" value="UniProtKB-KW"/>
</dbReference>
<dbReference type="CDD" id="cd17378">
    <property type="entry name" value="MFS_OCT_plant"/>
    <property type="match status" value="1"/>
</dbReference>
<dbReference type="FunFam" id="1.20.1250.20:FF:000417">
    <property type="entry name" value="Organic cation/carnitine transporter 1"/>
    <property type="match status" value="1"/>
</dbReference>
<dbReference type="Gene3D" id="1.20.1250.20">
    <property type="entry name" value="MFS general substrate transporter like domains"/>
    <property type="match status" value="1"/>
</dbReference>
<dbReference type="InterPro" id="IPR020846">
    <property type="entry name" value="MFS_dom"/>
</dbReference>
<dbReference type="InterPro" id="IPR005828">
    <property type="entry name" value="MFS_sugar_transport-like"/>
</dbReference>
<dbReference type="InterPro" id="IPR036259">
    <property type="entry name" value="MFS_trans_sf"/>
</dbReference>
<dbReference type="PANTHER" id="PTHR24064">
    <property type="entry name" value="SOLUTE CARRIER FAMILY 22 MEMBER"/>
    <property type="match status" value="1"/>
</dbReference>
<dbReference type="Pfam" id="PF00083">
    <property type="entry name" value="Sugar_tr"/>
    <property type="match status" value="1"/>
</dbReference>
<dbReference type="SUPFAM" id="SSF103473">
    <property type="entry name" value="MFS general substrate transporter"/>
    <property type="match status" value="1"/>
</dbReference>
<dbReference type="PROSITE" id="PS50850">
    <property type="entry name" value="MFS"/>
    <property type="match status" value="1"/>
</dbReference>
<organism>
    <name type="scientific">Arabidopsis thaliana</name>
    <name type="common">Mouse-ear cress</name>
    <dbReference type="NCBI Taxonomy" id="3702"/>
    <lineage>
        <taxon>Eukaryota</taxon>
        <taxon>Viridiplantae</taxon>
        <taxon>Streptophyta</taxon>
        <taxon>Embryophyta</taxon>
        <taxon>Tracheophyta</taxon>
        <taxon>Spermatophyta</taxon>
        <taxon>Magnoliopsida</taxon>
        <taxon>eudicotyledons</taxon>
        <taxon>Gunneridae</taxon>
        <taxon>Pentapetalae</taxon>
        <taxon>rosids</taxon>
        <taxon>malvids</taxon>
        <taxon>Brassicales</taxon>
        <taxon>Brassicaceae</taxon>
        <taxon>Camelineae</taxon>
        <taxon>Arabidopsis</taxon>
    </lineage>
</organism>
<feature type="chain" id="PRO_0000415359" description="Organic cation/carnitine transporter 3">
    <location>
        <begin position="1"/>
        <end position="518"/>
    </location>
</feature>
<feature type="topological domain" description="Cytoplasmic" evidence="2">
    <location>
        <begin position="1"/>
        <end position="32"/>
    </location>
</feature>
<feature type="transmembrane region" description="Helical; Name=1" evidence="2">
    <location>
        <begin position="33"/>
        <end position="53"/>
    </location>
</feature>
<feature type="topological domain" description="Extracellular" evidence="2">
    <location>
        <begin position="54"/>
        <end position="122"/>
    </location>
</feature>
<feature type="transmembrane region" description="Helical; Name=2" evidence="2">
    <location>
        <begin position="123"/>
        <end position="143"/>
    </location>
</feature>
<feature type="topological domain" description="Cytoplasmic" evidence="2">
    <location>
        <begin position="144"/>
        <end position="157"/>
    </location>
</feature>
<feature type="transmembrane region" description="Helical; Name=3" evidence="2">
    <location>
        <begin position="158"/>
        <end position="178"/>
    </location>
</feature>
<feature type="topological domain" description="Extracellular" evidence="2">
    <location>
        <begin position="179"/>
        <end position="180"/>
    </location>
</feature>
<feature type="transmembrane region" description="Helical; Name=4" evidence="2">
    <location>
        <begin position="181"/>
        <end position="197"/>
    </location>
</feature>
<feature type="topological domain" description="Cytoplasmic" evidence="2">
    <location>
        <begin position="198"/>
        <end position="210"/>
    </location>
</feature>
<feature type="transmembrane region" description="Helical; Name=5" evidence="2">
    <location>
        <begin position="211"/>
        <end position="231"/>
    </location>
</feature>
<feature type="topological domain" description="Extracellular" evidence="2">
    <location>
        <begin position="232"/>
        <end position="239"/>
    </location>
</feature>
<feature type="transmembrane region" description="Helical; Name=6" evidence="2">
    <location>
        <begin position="240"/>
        <end position="259"/>
    </location>
</feature>
<feature type="topological domain" description="Cytoplasmic" evidence="2">
    <location>
        <begin position="260"/>
        <end position="325"/>
    </location>
</feature>
<feature type="transmembrane region" description="Helical; Name=7" evidence="2">
    <location>
        <begin position="326"/>
        <end position="346"/>
    </location>
</feature>
<feature type="topological domain" description="Extracellular" evidence="2">
    <location>
        <begin position="347"/>
        <end position="355"/>
    </location>
</feature>
<feature type="transmembrane region" description="Helical; Name=8" evidence="2">
    <location>
        <begin position="356"/>
        <end position="376"/>
    </location>
</feature>
<feature type="topological domain" description="Cytoplasmic" evidence="2">
    <location>
        <begin position="377"/>
        <end position="383"/>
    </location>
</feature>
<feature type="transmembrane region" description="Helical; Name=9" evidence="2">
    <location>
        <begin position="384"/>
        <end position="404"/>
    </location>
</feature>
<feature type="topological domain" description="Extracellular" evidence="2">
    <location>
        <begin position="405"/>
        <end position="410"/>
    </location>
</feature>
<feature type="transmembrane region" description="Helical; Name=10" evidence="2">
    <location>
        <begin position="411"/>
        <end position="431"/>
    </location>
</feature>
<feature type="topological domain" description="Cytoplasmic" evidence="2">
    <location>
        <begin position="432"/>
        <end position="443"/>
    </location>
</feature>
<feature type="transmembrane region" description="Helical; Name=11" evidence="2">
    <location>
        <begin position="444"/>
        <end position="464"/>
    </location>
</feature>
<feature type="topological domain" description="Extracellular" evidence="2">
    <location>
        <begin position="465"/>
        <end position="470"/>
    </location>
</feature>
<feature type="transmembrane region" description="Helical; Name=12" evidence="2">
    <location>
        <begin position="471"/>
        <end position="491"/>
    </location>
</feature>
<feature type="topological domain" description="Cytoplasmic" evidence="2">
    <location>
        <begin position="492"/>
        <end position="518"/>
    </location>
</feature>
<feature type="region of interest" description="Disordered" evidence="3">
    <location>
        <begin position="1"/>
        <end position="23"/>
    </location>
</feature>
<feature type="binding site" evidence="2">
    <location>
        <begin position="198"/>
        <end position="205"/>
    </location>
    <ligand>
        <name>ATP</name>
        <dbReference type="ChEBI" id="CHEBI:30616"/>
    </ligand>
</feature>
<feature type="glycosylation site" description="N-linked (GlcNAc...) asparagine" evidence="2">
    <location>
        <position position="83"/>
    </location>
</feature>
<feature type="glycosylation site" description="N-linked (GlcNAc...) asparagine" evidence="2">
    <location>
        <position position="94"/>
    </location>
</feature>
<name>OCT3_ARATH</name>
<sequence>MADSTRPLLSDFNSSESNLPPPRSLEETIERCIGDFGWAQFLQAALVSFAWFFDAQQTFITVFTDSQPMWHCDNSDRVDSVCNTSSSNLCTLPNQTWSWDLNPHVSIISEWGLQCAGSFLKGFPASSFFLGCLIGGLALSTLADSSLGRKNMLLLSCLIMSLSSMLTAFSTSIWVYAFLRFLNGCGRATIGTCALVLSTELVGKKWRGQVGAMGFFCFTLGFLSLPMLGYINEGNSWRNLYVWTSIPTLIYCCLVRSFVRESPRWLIVKGRKEEAVSILQSIASNAITMSFTNLCFEVENDQSKSNPDVYDALKILVRKSWSFRRLLAAMVVGFGIGMVYYGMPLALTNLNFNLYLGVVFNALSEFPAFLITFFFIDKINRRDALIGFTALSGISSALIAVLGQQLGSLQIVLELVSFFSACTAFNMTLIYTIEMFPTCVRNSAISMVRQALVFGGVFSPVMVAAGRENQFWSYGLFGLIIGLCGLFVFGLPETRGSVLCDTMDEEEYKTLAKRQFIG</sequence>
<keyword id="KW-0067">ATP-binding</keyword>
<keyword id="KW-0325">Glycoprotein</keyword>
<keyword id="KW-0406">Ion transport</keyword>
<keyword id="KW-0472">Membrane</keyword>
<keyword id="KW-0547">Nucleotide-binding</keyword>
<keyword id="KW-1185">Reference proteome</keyword>
<keyword id="KW-0812">Transmembrane</keyword>
<keyword id="KW-1133">Transmembrane helix</keyword>
<keyword id="KW-0813">Transport</keyword>
<keyword id="KW-0926">Vacuole</keyword>
<comment type="function">
    <text evidence="1">High affinity carnitine transporter involved in the active cellular uptake of carnitine. Also transports organic cations (By similarity).</text>
</comment>
<comment type="subcellular location">
    <subcellularLocation>
        <location evidence="4">Vacuole membrane</location>
        <topology evidence="4">Multi-pass membrane protein</topology>
    </subcellularLocation>
</comment>
<comment type="tissue specificity">
    <text evidence="4">Mostly expressed in siliques, mainly in young seeds. Present in stems (cortical cells and parenchyma cells), at the basis of secondary inflorescences, and at the base of trichomes.</text>
</comment>
<comment type="induction">
    <text evidence="4">During cold stress treatment.</text>
</comment>
<comment type="similarity">
    <text evidence="5">Belongs to the major facilitator (TC 2.A.1) superfamily. Organic cation transporter (TC 2.A.1.19) family.</text>
</comment>
<accession>Q9SA38</accession>
<evidence type="ECO:0000250" key="1"/>
<evidence type="ECO:0000255" key="2"/>
<evidence type="ECO:0000256" key="3">
    <source>
        <dbReference type="SAM" id="MobiDB-lite"/>
    </source>
</evidence>
<evidence type="ECO:0000269" key="4">
    <source>
    </source>
</evidence>
<evidence type="ECO:0000305" key="5"/>